<evidence type="ECO:0000255" key="1">
    <source>
        <dbReference type="HAMAP-Rule" id="MF_00060"/>
    </source>
</evidence>
<feature type="chain" id="PRO_0000335277" description="5'-nucleotidase SurE">
    <location>
        <begin position="1"/>
        <end position="249"/>
    </location>
</feature>
<feature type="binding site" evidence="1">
    <location>
        <position position="9"/>
    </location>
    <ligand>
        <name>a divalent metal cation</name>
        <dbReference type="ChEBI" id="CHEBI:60240"/>
    </ligand>
</feature>
<feature type="binding site" evidence="1">
    <location>
        <position position="10"/>
    </location>
    <ligand>
        <name>a divalent metal cation</name>
        <dbReference type="ChEBI" id="CHEBI:60240"/>
    </ligand>
</feature>
<feature type="binding site" evidence="1">
    <location>
        <position position="40"/>
    </location>
    <ligand>
        <name>a divalent metal cation</name>
        <dbReference type="ChEBI" id="CHEBI:60240"/>
    </ligand>
</feature>
<feature type="binding site" evidence="1">
    <location>
        <position position="92"/>
    </location>
    <ligand>
        <name>a divalent metal cation</name>
        <dbReference type="ChEBI" id="CHEBI:60240"/>
    </ligand>
</feature>
<comment type="function">
    <text evidence="1">Nucleotidase that shows phosphatase activity on nucleoside 5'-monophosphates.</text>
</comment>
<comment type="catalytic activity">
    <reaction evidence="1">
        <text>a ribonucleoside 5'-phosphate + H2O = a ribonucleoside + phosphate</text>
        <dbReference type="Rhea" id="RHEA:12484"/>
        <dbReference type="ChEBI" id="CHEBI:15377"/>
        <dbReference type="ChEBI" id="CHEBI:18254"/>
        <dbReference type="ChEBI" id="CHEBI:43474"/>
        <dbReference type="ChEBI" id="CHEBI:58043"/>
        <dbReference type="EC" id="3.1.3.5"/>
    </reaction>
</comment>
<comment type="cofactor">
    <cofactor evidence="1">
        <name>a divalent metal cation</name>
        <dbReference type="ChEBI" id="CHEBI:60240"/>
    </cofactor>
    <text evidence="1">Binds 1 divalent metal cation per subunit.</text>
</comment>
<comment type="subcellular location">
    <subcellularLocation>
        <location evidence="1">Cytoplasm</location>
    </subcellularLocation>
</comment>
<comment type="similarity">
    <text evidence="1">Belongs to the SurE nucleotidase family.</text>
</comment>
<keyword id="KW-0963">Cytoplasm</keyword>
<keyword id="KW-0378">Hydrolase</keyword>
<keyword id="KW-0479">Metal-binding</keyword>
<keyword id="KW-0547">Nucleotide-binding</keyword>
<gene>
    <name evidence="1" type="primary">surE</name>
    <name type="ordered locus">Sputcn32_2752</name>
</gene>
<dbReference type="EC" id="3.1.3.5" evidence="1"/>
<dbReference type="EMBL" id="CP000681">
    <property type="protein sequence ID" value="ABP76471.1"/>
    <property type="molecule type" value="Genomic_DNA"/>
</dbReference>
<dbReference type="SMR" id="A4Y938"/>
<dbReference type="STRING" id="319224.Sputcn32_2752"/>
<dbReference type="KEGG" id="spc:Sputcn32_2752"/>
<dbReference type="eggNOG" id="COG0496">
    <property type="taxonomic scope" value="Bacteria"/>
</dbReference>
<dbReference type="HOGENOM" id="CLU_045192_1_2_6"/>
<dbReference type="GO" id="GO:0005737">
    <property type="term" value="C:cytoplasm"/>
    <property type="evidence" value="ECO:0007669"/>
    <property type="project" value="UniProtKB-SubCell"/>
</dbReference>
<dbReference type="GO" id="GO:0008254">
    <property type="term" value="F:3'-nucleotidase activity"/>
    <property type="evidence" value="ECO:0007669"/>
    <property type="project" value="TreeGrafter"/>
</dbReference>
<dbReference type="GO" id="GO:0008253">
    <property type="term" value="F:5'-nucleotidase activity"/>
    <property type="evidence" value="ECO:0007669"/>
    <property type="project" value="UniProtKB-UniRule"/>
</dbReference>
<dbReference type="GO" id="GO:0004309">
    <property type="term" value="F:exopolyphosphatase activity"/>
    <property type="evidence" value="ECO:0007669"/>
    <property type="project" value="TreeGrafter"/>
</dbReference>
<dbReference type="GO" id="GO:0046872">
    <property type="term" value="F:metal ion binding"/>
    <property type="evidence" value="ECO:0007669"/>
    <property type="project" value="UniProtKB-UniRule"/>
</dbReference>
<dbReference type="GO" id="GO:0000166">
    <property type="term" value="F:nucleotide binding"/>
    <property type="evidence" value="ECO:0007669"/>
    <property type="project" value="UniProtKB-KW"/>
</dbReference>
<dbReference type="FunFam" id="3.40.1210.10:FF:000001">
    <property type="entry name" value="5'/3'-nucleotidase SurE"/>
    <property type="match status" value="1"/>
</dbReference>
<dbReference type="Gene3D" id="3.40.1210.10">
    <property type="entry name" value="Survival protein SurE-like phosphatase/nucleotidase"/>
    <property type="match status" value="1"/>
</dbReference>
<dbReference type="HAMAP" id="MF_00060">
    <property type="entry name" value="SurE"/>
    <property type="match status" value="1"/>
</dbReference>
<dbReference type="InterPro" id="IPR030048">
    <property type="entry name" value="SurE"/>
</dbReference>
<dbReference type="InterPro" id="IPR002828">
    <property type="entry name" value="SurE-like_Pase/nucleotidase"/>
</dbReference>
<dbReference type="InterPro" id="IPR036523">
    <property type="entry name" value="SurE-like_sf"/>
</dbReference>
<dbReference type="NCBIfam" id="NF001489">
    <property type="entry name" value="PRK00346.1-3"/>
    <property type="match status" value="1"/>
</dbReference>
<dbReference type="NCBIfam" id="NF001490">
    <property type="entry name" value="PRK00346.1-4"/>
    <property type="match status" value="1"/>
</dbReference>
<dbReference type="NCBIfam" id="TIGR00087">
    <property type="entry name" value="surE"/>
    <property type="match status" value="1"/>
</dbReference>
<dbReference type="PANTHER" id="PTHR30457">
    <property type="entry name" value="5'-NUCLEOTIDASE SURE"/>
    <property type="match status" value="1"/>
</dbReference>
<dbReference type="PANTHER" id="PTHR30457:SF12">
    <property type="entry name" value="5'_3'-NUCLEOTIDASE SURE"/>
    <property type="match status" value="1"/>
</dbReference>
<dbReference type="Pfam" id="PF01975">
    <property type="entry name" value="SurE"/>
    <property type="match status" value="1"/>
</dbReference>
<dbReference type="SUPFAM" id="SSF64167">
    <property type="entry name" value="SurE-like"/>
    <property type="match status" value="1"/>
</dbReference>
<sequence length="249" mass="26780">MIRILVSNDDGVNAPGIKALTEALVEIANVMTVAPDRNCSGASNSLTLTNPLRINRLDNGYISVHGTPTDCVHLAIRELCDGEPDMVVSGINAGANMGDDTLYSGTVAAAMEGRFLGFPAVAISLNGREFKHYQSAAVYARRIVQGLLLHPLASDQILNINVPDLPLDEIKGIRVTRLGARHKAEGIVRTKDPAGREIFWLGPPGLEQDATEGTDFHAVANGYVSITPLTVDLTAYRQLSVLQNWVDKI</sequence>
<reference key="1">
    <citation type="submission" date="2007-04" db="EMBL/GenBank/DDBJ databases">
        <title>Complete sequence of Shewanella putrefaciens CN-32.</title>
        <authorList>
            <consortium name="US DOE Joint Genome Institute"/>
            <person name="Copeland A."/>
            <person name="Lucas S."/>
            <person name="Lapidus A."/>
            <person name="Barry K."/>
            <person name="Detter J.C."/>
            <person name="Glavina del Rio T."/>
            <person name="Hammon N."/>
            <person name="Israni S."/>
            <person name="Dalin E."/>
            <person name="Tice H."/>
            <person name="Pitluck S."/>
            <person name="Chain P."/>
            <person name="Malfatti S."/>
            <person name="Shin M."/>
            <person name="Vergez L."/>
            <person name="Schmutz J."/>
            <person name="Larimer F."/>
            <person name="Land M."/>
            <person name="Hauser L."/>
            <person name="Kyrpides N."/>
            <person name="Mikhailova N."/>
            <person name="Romine M.F."/>
            <person name="Fredrickson J."/>
            <person name="Tiedje J."/>
            <person name="Richardson P."/>
        </authorList>
    </citation>
    <scope>NUCLEOTIDE SEQUENCE [LARGE SCALE GENOMIC DNA]</scope>
    <source>
        <strain>CN-32 / ATCC BAA-453</strain>
    </source>
</reference>
<organism>
    <name type="scientific">Shewanella putrefaciens (strain CN-32 / ATCC BAA-453)</name>
    <dbReference type="NCBI Taxonomy" id="319224"/>
    <lineage>
        <taxon>Bacteria</taxon>
        <taxon>Pseudomonadati</taxon>
        <taxon>Pseudomonadota</taxon>
        <taxon>Gammaproteobacteria</taxon>
        <taxon>Alteromonadales</taxon>
        <taxon>Shewanellaceae</taxon>
        <taxon>Shewanella</taxon>
    </lineage>
</organism>
<accession>A4Y938</accession>
<proteinExistence type="inferred from homology"/>
<name>SURE_SHEPC</name>
<protein>
    <recommendedName>
        <fullName evidence="1">5'-nucleotidase SurE</fullName>
        <ecNumber evidence="1">3.1.3.5</ecNumber>
    </recommendedName>
    <alternativeName>
        <fullName evidence="1">Nucleoside 5'-monophosphate phosphohydrolase</fullName>
    </alternativeName>
</protein>